<evidence type="ECO:0000250" key="1">
    <source>
        <dbReference type="UniProtKB" id="P20434"/>
    </source>
</evidence>
<evidence type="ECO:0000269" key="2">
    <source>
    </source>
</evidence>
<evidence type="ECO:0000269" key="3">
    <source>
    </source>
</evidence>
<evidence type="ECO:0000269" key="4">
    <source>
    </source>
</evidence>
<evidence type="ECO:0000269" key="5">
    <source>
    </source>
</evidence>
<evidence type="ECO:0000269" key="6">
    <source>
    </source>
</evidence>
<evidence type="ECO:0000269" key="7">
    <source>
    </source>
</evidence>
<evidence type="ECO:0000269" key="8">
    <source>
    </source>
</evidence>
<evidence type="ECO:0000269" key="9">
    <source>
    </source>
</evidence>
<evidence type="ECO:0000269" key="10">
    <source>
    </source>
</evidence>
<evidence type="ECO:0000269" key="11">
    <source>
    </source>
</evidence>
<evidence type="ECO:0000269" key="12">
    <source>
    </source>
</evidence>
<evidence type="ECO:0000269" key="13">
    <source>
    </source>
</evidence>
<evidence type="ECO:0000269" key="14">
    <source>
    </source>
</evidence>
<evidence type="ECO:0000269" key="15">
    <source>
    </source>
</evidence>
<evidence type="ECO:0000269" key="16">
    <source>
    </source>
</evidence>
<evidence type="ECO:0000269" key="17">
    <source>
    </source>
</evidence>
<evidence type="ECO:0000269" key="18">
    <source>
    </source>
</evidence>
<evidence type="ECO:0000269" key="19">
    <source>
    </source>
</evidence>
<evidence type="ECO:0000269" key="20">
    <source>
    </source>
</evidence>
<evidence type="ECO:0000269" key="21">
    <source ref="6"/>
</evidence>
<evidence type="ECO:0000305" key="22"/>
<evidence type="ECO:0000305" key="23">
    <source>
    </source>
</evidence>
<evidence type="ECO:0000305" key="24">
    <source>
    </source>
</evidence>
<evidence type="ECO:0000312" key="25">
    <source>
        <dbReference type="HGNC" id="HGNC:9192"/>
    </source>
</evidence>
<evidence type="ECO:0007744" key="26">
    <source>
    </source>
</evidence>
<evidence type="ECO:0007744" key="27">
    <source>
    </source>
</evidence>
<evidence type="ECO:0007744" key="28">
    <source>
    </source>
</evidence>
<evidence type="ECO:0007829" key="29">
    <source>
        <dbReference type="PDB" id="7D58"/>
    </source>
</evidence>
<evidence type="ECO:0007829" key="30">
    <source>
        <dbReference type="PDB" id="7DU2"/>
    </source>
</evidence>
<evidence type="ECO:0007829" key="31">
    <source>
        <dbReference type="PDB" id="7OB9"/>
    </source>
</evidence>
<protein>
    <recommendedName>
        <fullName>DNA-directed RNA polymerases I, II, and III subunit RPABC1</fullName>
        <shortName>RNA polymerases I, II, and III subunit ABC1</shortName>
    </recommendedName>
    <alternativeName>
        <fullName>DNA-directed RNA polymerase II 23 kDa polypeptide</fullName>
    </alternativeName>
    <alternativeName>
        <fullName>DNA-directed RNA polymerase II subunit E</fullName>
    </alternativeName>
    <alternativeName>
        <fullName>RPB5 homolog</fullName>
    </alternativeName>
    <alternativeName>
        <fullName>XAP4</fullName>
    </alternativeName>
</protein>
<name>RPAB1_HUMAN</name>
<reference key="1">
    <citation type="journal article" date="1989" name="J. Biol. Chem.">
        <title>Isolation and molecular characterization of a cDNA encoding the 23-kDa subunit of human RNA polymerase II.</title>
        <authorList>
            <person name="Pati U.K."/>
            <person name="Weissman S.M."/>
        </authorList>
    </citation>
    <scope>NUCLEOTIDE SEQUENCE [MRNA]</scope>
    <scope>PARTIAL PROTEIN SEQUENCE</scope>
    <scope>VARIANT PHE-44</scope>
</reference>
<reference key="2">
    <citation type="journal article" date="1991" name="J. Biol. Chem.">
        <authorList>
            <person name="Pati U.K."/>
            <person name="Weissman S.M."/>
        </authorList>
    </citation>
    <scope>ERRATUM OF PUBMED:2753903</scope>
    <scope>SEQUENCE REVISION</scope>
</reference>
<reference key="3">
    <citation type="journal article" date="1995" name="EMBO J.">
        <title>Human RPB5, a subunit shared by eukaryotic nuclear RNA polymerases, binds human hepatitis B virus X protein and may play a role in X transactivation.</title>
        <authorList>
            <person name="Cheong J.H."/>
            <person name="Yi M."/>
            <person name="Lin Y."/>
            <person name="Murakami S."/>
        </authorList>
    </citation>
    <scope>NUCLEOTIDE SEQUENCE [MRNA]</scope>
    <scope>VARIANT PHE-44</scope>
    <scope>INTERACTION WITH HBV PROTEIN X (MICROBIAL INFECTION)</scope>
</reference>
<reference key="4">
    <citation type="journal article" date="2004" name="Nat. Genet.">
        <title>Complete sequencing and characterization of 21,243 full-length human cDNAs.</title>
        <authorList>
            <person name="Ota T."/>
            <person name="Suzuki Y."/>
            <person name="Nishikawa T."/>
            <person name="Otsuki T."/>
            <person name="Sugiyama T."/>
            <person name="Irie R."/>
            <person name="Wakamatsu A."/>
            <person name="Hayashi K."/>
            <person name="Sato H."/>
            <person name="Nagai K."/>
            <person name="Kimura K."/>
            <person name="Makita H."/>
            <person name="Sekine M."/>
            <person name="Obayashi M."/>
            <person name="Nishi T."/>
            <person name="Shibahara T."/>
            <person name="Tanaka T."/>
            <person name="Ishii S."/>
            <person name="Yamamoto J."/>
            <person name="Saito K."/>
            <person name="Kawai Y."/>
            <person name="Isono Y."/>
            <person name="Nakamura Y."/>
            <person name="Nagahari K."/>
            <person name="Murakami K."/>
            <person name="Yasuda T."/>
            <person name="Iwayanagi T."/>
            <person name="Wagatsuma M."/>
            <person name="Shiratori A."/>
            <person name="Sudo H."/>
            <person name="Hosoiri T."/>
            <person name="Kaku Y."/>
            <person name="Kodaira H."/>
            <person name="Kondo H."/>
            <person name="Sugawara M."/>
            <person name="Takahashi M."/>
            <person name="Kanda K."/>
            <person name="Yokoi T."/>
            <person name="Furuya T."/>
            <person name="Kikkawa E."/>
            <person name="Omura Y."/>
            <person name="Abe K."/>
            <person name="Kamihara K."/>
            <person name="Katsuta N."/>
            <person name="Sato K."/>
            <person name="Tanikawa M."/>
            <person name="Yamazaki M."/>
            <person name="Ninomiya K."/>
            <person name="Ishibashi T."/>
            <person name="Yamashita H."/>
            <person name="Murakawa K."/>
            <person name="Fujimori K."/>
            <person name="Tanai H."/>
            <person name="Kimata M."/>
            <person name="Watanabe M."/>
            <person name="Hiraoka S."/>
            <person name="Chiba Y."/>
            <person name="Ishida S."/>
            <person name="Ono Y."/>
            <person name="Takiguchi S."/>
            <person name="Watanabe S."/>
            <person name="Yosida M."/>
            <person name="Hotuta T."/>
            <person name="Kusano J."/>
            <person name="Kanehori K."/>
            <person name="Takahashi-Fujii A."/>
            <person name="Hara H."/>
            <person name="Tanase T.-O."/>
            <person name="Nomura Y."/>
            <person name="Togiya S."/>
            <person name="Komai F."/>
            <person name="Hara R."/>
            <person name="Takeuchi K."/>
            <person name="Arita M."/>
            <person name="Imose N."/>
            <person name="Musashino K."/>
            <person name="Yuuki H."/>
            <person name="Oshima A."/>
            <person name="Sasaki N."/>
            <person name="Aotsuka S."/>
            <person name="Yoshikawa Y."/>
            <person name="Matsunawa H."/>
            <person name="Ichihara T."/>
            <person name="Shiohata N."/>
            <person name="Sano S."/>
            <person name="Moriya S."/>
            <person name="Momiyama H."/>
            <person name="Satoh N."/>
            <person name="Takami S."/>
            <person name="Terashima Y."/>
            <person name="Suzuki O."/>
            <person name="Nakagawa S."/>
            <person name="Senoh A."/>
            <person name="Mizoguchi H."/>
            <person name="Goto Y."/>
            <person name="Shimizu F."/>
            <person name="Wakebe H."/>
            <person name="Hishigaki H."/>
            <person name="Watanabe T."/>
            <person name="Sugiyama A."/>
            <person name="Takemoto M."/>
            <person name="Kawakami B."/>
            <person name="Yamazaki M."/>
            <person name="Watanabe K."/>
            <person name="Kumagai A."/>
            <person name="Itakura S."/>
            <person name="Fukuzumi Y."/>
            <person name="Fujimori Y."/>
            <person name="Komiyama M."/>
            <person name="Tashiro H."/>
            <person name="Tanigami A."/>
            <person name="Fujiwara T."/>
            <person name="Ono T."/>
            <person name="Yamada K."/>
            <person name="Fujii Y."/>
            <person name="Ozaki K."/>
            <person name="Hirao M."/>
            <person name="Ohmori Y."/>
            <person name="Kawabata A."/>
            <person name="Hikiji T."/>
            <person name="Kobatake N."/>
            <person name="Inagaki H."/>
            <person name="Ikema Y."/>
            <person name="Okamoto S."/>
            <person name="Okitani R."/>
            <person name="Kawakami T."/>
            <person name="Noguchi S."/>
            <person name="Itoh T."/>
            <person name="Shigeta K."/>
            <person name="Senba T."/>
            <person name="Matsumura K."/>
            <person name="Nakajima Y."/>
            <person name="Mizuno T."/>
            <person name="Morinaga M."/>
            <person name="Sasaki M."/>
            <person name="Togashi T."/>
            <person name="Oyama M."/>
            <person name="Hata H."/>
            <person name="Watanabe M."/>
            <person name="Komatsu T."/>
            <person name="Mizushima-Sugano J."/>
            <person name="Satoh T."/>
            <person name="Shirai Y."/>
            <person name="Takahashi Y."/>
            <person name="Nakagawa K."/>
            <person name="Okumura K."/>
            <person name="Nagase T."/>
            <person name="Nomura N."/>
            <person name="Kikuchi H."/>
            <person name="Masuho Y."/>
            <person name="Yamashita R."/>
            <person name="Nakai K."/>
            <person name="Yada T."/>
            <person name="Nakamura Y."/>
            <person name="Ohara O."/>
            <person name="Isogai T."/>
            <person name="Sugano S."/>
        </authorList>
    </citation>
    <scope>NUCLEOTIDE SEQUENCE [LARGE SCALE MRNA]</scope>
    <scope>VARIANT PHE-44</scope>
    <source>
        <tissue>Heart</tissue>
    </source>
</reference>
<reference key="5">
    <citation type="journal article" date="2004" name="Nature">
        <title>The DNA sequence and biology of human chromosome 19.</title>
        <authorList>
            <person name="Grimwood J."/>
            <person name="Gordon L.A."/>
            <person name="Olsen A.S."/>
            <person name="Terry A."/>
            <person name="Schmutz J."/>
            <person name="Lamerdin J.E."/>
            <person name="Hellsten U."/>
            <person name="Goodstein D."/>
            <person name="Couronne O."/>
            <person name="Tran-Gyamfi M."/>
            <person name="Aerts A."/>
            <person name="Altherr M."/>
            <person name="Ashworth L."/>
            <person name="Bajorek E."/>
            <person name="Black S."/>
            <person name="Branscomb E."/>
            <person name="Caenepeel S."/>
            <person name="Carrano A.V."/>
            <person name="Caoile C."/>
            <person name="Chan Y.M."/>
            <person name="Christensen M."/>
            <person name="Cleland C.A."/>
            <person name="Copeland A."/>
            <person name="Dalin E."/>
            <person name="Dehal P."/>
            <person name="Denys M."/>
            <person name="Detter J.C."/>
            <person name="Escobar J."/>
            <person name="Flowers D."/>
            <person name="Fotopulos D."/>
            <person name="Garcia C."/>
            <person name="Georgescu A.M."/>
            <person name="Glavina T."/>
            <person name="Gomez M."/>
            <person name="Gonzales E."/>
            <person name="Groza M."/>
            <person name="Hammon N."/>
            <person name="Hawkins T."/>
            <person name="Haydu L."/>
            <person name="Ho I."/>
            <person name="Huang W."/>
            <person name="Israni S."/>
            <person name="Jett J."/>
            <person name="Kadner K."/>
            <person name="Kimball H."/>
            <person name="Kobayashi A."/>
            <person name="Larionov V."/>
            <person name="Leem S.-H."/>
            <person name="Lopez F."/>
            <person name="Lou Y."/>
            <person name="Lowry S."/>
            <person name="Malfatti S."/>
            <person name="Martinez D."/>
            <person name="McCready P.M."/>
            <person name="Medina C."/>
            <person name="Morgan J."/>
            <person name="Nelson K."/>
            <person name="Nolan M."/>
            <person name="Ovcharenko I."/>
            <person name="Pitluck S."/>
            <person name="Pollard M."/>
            <person name="Popkie A.P."/>
            <person name="Predki P."/>
            <person name="Quan G."/>
            <person name="Ramirez L."/>
            <person name="Rash S."/>
            <person name="Retterer J."/>
            <person name="Rodriguez A."/>
            <person name="Rogers S."/>
            <person name="Salamov A."/>
            <person name="Salazar A."/>
            <person name="She X."/>
            <person name="Smith D."/>
            <person name="Slezak T."/>
            <person name="Solovyev V."/>
            <person name="Thayer N."/>
            <person name="Tice H."/>
            <person name="Tsai M."/>
            <person name="Ustaszewska A."/>
            <person name="Vo N."/>
            <person name="Wagner M."/>
            <person name="Wheeler J."/>
            <person name="Wu K."/>
            <person name="Xie G."/>
            <person name="Yang J."/>
            <person name="Dubchak I."/>
            <person name="Furey T.S."/>
            <person name="DeJong P."/>
            <person name="Dickson M."/>
            <person name="Gordon D."/>
            <person name="Eichler E.E."/>
            <person name="Pennacchio L.A."/>
            <person name="Richardson P."/>
            <person name="Stubbs L."/>
            <person name="Rokhsar D.S."/>
            <person name="Myers R.M."/>
            <person name="Rubin E.M."/>
            <person name="Lucas S.M."/>
        </authorList>
    </citation>
    <scope>NUCLEOTIDE SEQUENCE [LARGE SCALE GENOMIC DNA]</scope>
</reference>
<reference key="6">
    <citation type="submission" date="2005-09" db="EMBL/GenBank/DDBJ databases">
        <authorList>
            <person name="Mural R.J."/>
            <person name="Istrail S."/>
            <person name="Sutton G.G."/>
            <person name="Florea L."/>
            <person name="Halpern A.L."/>
            <person name="Mobarry C.M."/>
            <person name="Lippert R."/>
            <person name="Walenz B."/>
            <person name="Shatkay H."/>
            <person name="Dew I."/>
            <person name="Miller J.R."/>
            <person name="Flanigan M.J."/>
            <person name="Edwards N.J."/>
            <person name="Bolanos R."/>
            <person name="Fasulo D."/>
            <person name="Halldorsson B.V."/>
            <person name="Hannenhalli S."/>
            <person name="Turner R."/>
            <person name="Yooseph S."/>
            <person name="Lu F."/>
            <person name="Nusskern D.R."/>
            <person name="Shue B.C."/>
            <person name="Zheng X.H."/>
            <person name="Zhong F."/>
            <person name="Delcher A.L."/>
            <person name="Huson D.H."/>
            <person name="Kravitz S.A."/>
            <person name="Mouchard L."/>
            <person name="Reinert K."/>
            <person name="Remington K.A."/>
            <person name="Clark A.G."/>
            <person name="Waterman M.S."/>
            <person name="Eichler E.E."/>
            <person name="Adams M.D."/>
            <person name="Hunkapiller M.W."/>
            <person name="Myers E.W."/>
            <person name="Venter J.C."/>
        </authorList>
    </citation>
    <scope>NUCLEOTIDE SEQUENCE [LARGE SCALE GENOMIC DNA]</scope>
    <scope>VARIANT PHE-44</scope>
</reference>
<reference key="7">
    <citation type="journal article" date="2004" name="Genome Res.">
        <title>The status, quality, and expansion of the NIH full-length cDNA project: the Mammalian Gene Collection (MGC).</title>
        <authorList>
            <consortium name="The MGC Project Team"/>
        </authorList>
    </citation>
    <scope>NUCLEOTIDE SEQUENCE [LARGE SCALE MRNA]</scope>
    <scope>VARIANT PHE-44</scope>
    <source>
        <tissue>Lung</tissue>
    </source>
</reference>
<reference key="8">
    <citation type="journal article" date="1998" name="J. Biol. Chem.">
        <title>Immunoaffinity purification and functional characterization of human transcription factor IIH and RNA polymerase II from clonal cell lines that conditionally express epitope-tagged subunits of the multiprotein complexes.</title>
        <authorList>
            <person name="Kershnar E."/>
            <person name="Wu S.-Y."/>
            <person name="Chiang C.-M."/>
        </authorList>
    </citation>
    <scope>FUNCTION</scope>
    <scope>IDENTIFICATION IN THE RNA POLYMERASE II CORE-COMPLEX</scope>
    <scope>SUBCELLULAR LOCATION</scope>
</reference>
<reference key="9">
    <citation type="journal article" date="1998" name="Mol. Cell. Biol.">
        <title>RMP, a novel RNA polymerase II subunit 5-interacting protein, counteracts transactivation by hepatitis B virus X protein.</title>
        <authorList>
            <person name="Dorjsuren D."/>
            <person name="Lin Y."/>
            <person name="Wei W."/>
            <person name="Yamashita T."/>
            <person name="Nomura T."/>
            <person name="Hayashi N."/>
            <person name="Murakami S."/>
        </authorList>
    </citation>
    <scope>INTERACTION WITH URI1</scope>
</reference>
<reference key="10">
    <citation type="journal article" date="2006" name="Mol. Cell. Biol.">
        <title>RNA polymerase I-specific subunit CAST/hPAF49 has a role in the activation of transcription by upstream binding factor.</title>
        <authorList>
            <person name="Panov K.I."/>
            <person name="Panova T.B."/>
            <person name="Gadal O."/>
            <person name="Nishiyama K."/>
            <person name="Saito T."/>
            <person name="Russell J."/>
            <person name="Zomerdijk J.C.B.M."/>
        </authorList>
    </citation>
    <scope>FUNCTION</scope>
    <scope>IDENTIFICATION IN THE RNA POL I COMPLEX</scope>
</reference>
<reference key="11">
    <citation type="journal article" date="2009" name="Anal. Chem.">
        <title>Lys-N and trypsin cover complementary parts of the phosphoproteome in a refined SCX-based approach.</title>
        <authorList>
            <person name="Gauci S."/>
            <person name="Helbig A.O."/>
            <person name="Slijper M."/>
            <person name="Krijgsveld J."/>
            <person name="Heck A.J."/>
            <person name="Mohammed S."/>
        </authorList>
    </citation>
    <scope>ACETYLATION [LARGE SCALE ANALYSIS] AT MET-1</scope>
    <scope>IDENTIFICATION BY MASS SPECTROMETRY [LARGE SCALE ANALYSIS]</scope>
</reference>
<reference key="12">
    <citation type="journal article" date="2010" name="Genome Res.">
        <title>Defining the RNA polymerase III transcriptome: Genome-wide localization of the RNA polymerase III transcription machinery in human cells.</title>
        <authorList>
            <person name="Canella D."/>
            <person name="Praz V."/>
            <person name="Reina J.H."/>
            <person name="Cousin P."/>
            <person name="Hernandez N."/>
        </authorList>
    </citation>
    <scope>FUNCTION OF POL III</scope>
</reference>
<reference key="13">
    <citation type="journal article" date="2011" name="BMC Syst. Biol.">
        <title>Initial characterization of the human central proteome.</title>
        <authorList>
            <person name="Burkard T.R."/>
            <person name="Planyavsky M."/>
            <person name="Kaupe I."/>
            <person name="Breitwieser F.P."/>
            <person name="Buerckstuemmer T."/>
            <person name="Bennett K.L."/>
            <person name="Superti-Furga G."/>
            <person name="Colinge J."/>
        </authorList>
    </citation>
    <scope>IDENTIFICATION BY MASS SPECTROMETRY [LARGE SCALE ANALYSIS]</scope>
</reference>
<reference key="14">
    <citation type="journal article" date="2012" name="Proc. Natl. Acad. Sci. U.S.A.">
        <title>N-terminal acetylome analyses and functional insights of the N-terminal acetyltransferase NatB.</title>
        <authorList>
            <person name="Van Damme P."/>
            <person name="Lasa M."/>
            <person name="Polevoda B."/>
            <person name="Gazquez C."/>
            <person name="Elosegui-Artola A."/>
            <person name="Kim D.S."/>
            <person name="De Juan-Pardo E."/>
            <person name="Demeyer K."/>
            <person name="Hole K."/>
            <person name="Larrea E."/>
            <person name="Timmerman E."/>
            <person name="Prieto J."/>
            <person name="Arnesen T."/>
            <person name="Sherman F."/>
            <person name="Gevaert K."/>
            <person name="Aldabe R."/>
        </authorList>
    </citation>
    <scope>ACETYLATION [LARGE SCALE ANALYSIS] AT MET-1</scope>
    <scope>IDENTIFICATION BY MASS SPECTROMETRY [LARGE SCALE ANALYSIS]</scope>
</reference>
<reference key="15">
    <citation type="journal article" date="2017" name="Nat. Struct. Mol. Biol.">
        <title>Site-specific mapping of the human SUMO proteome reveals co-modification with phosphorylation.</title>
        <authorList>
            <person name="Hendriks I.A."/>
            <person name="Lyon D."/>
            <person name="Young C."/>
            <person name="Jensen L.J."/>
            <person name="Vertegaal A.C."/>
            <person name="Nielsen M.L."/>
        </authorList>
    </citation>
    <scope>SUMOYLATION [LARGE SCALE ANALYSIS] AT LYS-81</scope>
    <scope>IDENTIFICATION BY MASS SPECTROMETRY [LARGE SCALE ANALYSIS]</scope>
</reference>
<reference key="16">
    <citation type="journal article" date="2020" name="J. Proteome Res.">
        <title>Upstream ORF-Encoded ASDURF Is a Novel Prefoldin-like Subunit of the PAQosome.</title>
        <authorList>
            <person name="Cloutier P."/>
            <person name="Poitras C."/>
            <person name="Faubert D."/>
            <person name="Bouchard A."/>
            <person name="Blanchette M."/>
            <person name="Gauthier M.S."/>
            <person name="Coulombe B."/>
        </authorList>
    </citation>
    <scope>IDENTIFICATION IN THE PAQOSOME COMPLEX</scope>
    <scope>IDENTIFICATION BY MASS SPECTROMETRY</scope>
</reference>
<reference key="17">
    <citation type="journal article" date="2016" name="Nature">
        <title>Near-atomic resolution visualization of human transcription promoter opening.</title>
        <authorList>
            <person name="He Y."/>
            <person name="Yan C."/>
            <person name="Fang J."/>
            <person name="Inouye C."/>
            <person name="Tjian R."/>
            <person name="Ivanov I."/>
            <person name="Nogales E."/>
        </authorList>
    </citation>
    <scope>STRUCTURE BY ELECTRON MICROSCOPY (3.90 ANGSTROMS)</scope>
    <scope>FUNCTION OF POL II</scope>
    <scope>SUBUNIT</scope>
</reference>
<reference key="18">
    <citation type="journal article" date="2018" name="Nat. Struct. Mol. Biol.">
        <title>Architecture of Pol II(G) and molecular mechanism of transcription regulation by Gdown1.</title>
        <authorList>
            <person name="Jishage M."/>
            <person name="Yu X."/>
            <person name="Shi Y."/>
            <person name="Ganesan S.J."/>
            <person name="Chen W.Y."/>
            <person name="Sali A."/>
            <person name="Chait B.T."/>
            <person name="Asturias F.J."/>
            <person name="Roeder R.G."/>
        </authorList>
    </citation>
    <scope>STRUCTURE BY ELECTRON MICROSCOPY (3.90 ANGSTROMS)</scope>
    <scope>FUNCTION OF POL II</scope>
    <scope>SUBUNIT</scope>
</reference>
<reference key="19">
    <citation type="journal article" date="2020" name="Nat. Commun.">
        <title>Structure of human RNA polymerase III.</title>
        <authorList>
            <person name="Ramsay E.P."/>
            <person name="Abascal-Palacios G."/>
            <person name="Daiss J.L."/>
            <person name="King H."/>
            <person name="Gouge J."/>
            <person name="Pilsl M."/>
            <person name="Beuron F."/>
            <person name="Morris E."/>
            <person name="Gunkel P."/>
            <person name="Engel C."/>
            <person name="Vannini A."/>
        </authorList>
    </citation>
    <scope>STRUCTURE BY ELECTRON MICROSCOPY (4.00 ANGSTROMS)</scope>
    <scope>SUBUNIT</scope>
    <scope>SUBCELLULAR LOCATION</scope>
</reference>
<reference key="20">
    <citation type="journal article" date="2021" name="Cell Discov.">
        <title>Structure of the human RNA polymerase I elongation complex.</title>
        <authorList>
            <person name="Zhao D."/>
            <person name="Liu W."/>
            <person name="Chen K."/>
            <person name="Wu Z."/>
            <person name="Yang H."/>
            <person name="Xu Y."/>
        </authorList>
    </citation>
    <scope>STRUCTURE BY ELECTRON MICROSCOPY (2.81 ANGSTROMS)</scope>
    <scope>FUNCTION OF POL I</scope>
    <scope>SUBUNIT</scope>
</reference>
<reference key="21">
    <citation type="journal article" date="2021" name="Cell Res.">
        <title>Structure of human RNA polymerase III elongation complex.</title>
        <authorList>
            <person name="Li L."/>
            <person name="Yu Z."/>
            <person name="Zhao D."/>
            <person name="Ren Y."/>
            <person name="Hou H."/>
            <person name="Xu Y."/>
        </authorList>
    </citation>
    <scope>STRUCTURE BY ELECTRON MICROSCOPY (3.35 ANGSTROMS)</scope>
    <scope>SUBUNIT</scope>
</reference>
<reference key="22">
    <citation type="journal article" date="2021" name="Nat. Commun.">
        <title>Structural insights into RNA polymerase III-mediated transcription termination through trapping poly-deoxythymidine.</title>
        <authorList>
            <person name="Hou H."/>
            <person name="Li Y."/>
            <person name="Wang M."/>
            <person name="Liu A."/>
            <person name="Yu Z."/>
            <person name="Chen K."/>
            <person name="Zhao D."/>
            <person name="Xu Y."/>
        </authorList>
    </citation>
    <scope>STRUCTURE BY ELECTRON MICROSCOPY (3.60 ANGSTROMS)</scope>
    <scope>SUBUNIT</scope>
</reference>
<reference key="23">
    <citation type="journal article" date="2021" name="Nat. Struct. Mol. Biol.">
        <title>Cryo-EM structures of human RNA polymerase III in its unbound and transcribing states.</title>
        <authorList>
            <person name="Girbig M."/>
            <person name="Misiaszek A.D."/>
            <person name="Vorlander M.K."/>
            <person name="Lafita A."/>
            <person name="Grotsch H."/>
            <person name="Baudin F."/>
            <person name="Bateman A."/>
            <person name="Muller C.W."/>
        </authorList>
    </citation>
    <scope>STRUCTURE BY ELECTRON MICROSCOPY (2.80 ANGSTROMS)</scope>
    <scope>SUBUNIT</scope>
</reference>
<reference key="24">
    <citation type="journal article" date="2021" name="Nat. Struct. Mol. Biol.">
        <title>Cryo-EM structures of human RNA polymerase I.</title>
        <authorList>
            <person name="Misiaszek A.D."/>
            <person name="Girbig M."/>
            <person name="Grotsch H."/>
            <person name="Baudin F."/>
            <person name="Murciano B."/>
            <person name="Lafita A."/>
            <person name="Muller C.W."/>
        </authorList>
    </citation>
    <scope>STRUCTURE BY ELECTRON MICROSCOPY (2.70 ANGSTROMS)</scope>
    <scope>FUNCTION OF POL I</scope>
    <scope>SUBUNIT</scope>
    <scope>SUBCELLULAR LOCATION</scope>
</reference>
<reference key="25">
    <citation type="journal article" date="2021" name="Nat. Struct. Mol. Biol.">
        <title>Structural insights into transcriptional regulation of human RNA polymerase III.</title>
        <authorList>
            <person name="Wang Q."/>
            <person name="Li S."/>
            <person name="Wan F."/>
            <person name="Xu Y."/>
            <person name="Wu Z."/>
            <person name="Cao M."/>
            <person name="Lan P."/>
            <person name="Lei M."/>
            <person name="Wu J."/>
        </authorList>
    </citation>
    <scope>STRUCTURE BY ELECTRON MICROSCOPY (2.90 ANGSTROMS)</scope>
    <scope>SUBUNIT</scope>
</reference>
<reference key="26">
    <citation type="journal article" date="2022" name="Life. Sci Alliance">
        <title>The human RNA polymerase I structure reveals an HMG-like docking domain specific to metazoans.</title>
        <authorList>
            <person name="Daiss J.L."/>
            <person name="Pilsl M."/>
            <person name="Straub K."/>
            <person name="Bleckmann A."/>
            <person name="Hocherl M."/>
            <person name="Heiss F.B."/>
            <person name="Abascal-Palacios G."/>
            <person name="Ramsay E.P."/>
            <person name="Tluckova K."/>
            <person name="Mars J.C."/>
            <person name="Furtges T."/>
            <person name="Bruckmann A."/>
            <person name="Rudack T."/>
            <person name="Bernecky C."/>
            <person name="Lamour V."/>
            <person name="Panov K."/>
            <person name="Vannini A."/>
            <person name="Moss T."/>
            <person name="Engel C."/>
        </authorList>
    </citation>
    <scope>STRUCTURE BY ELECTRON MICROSCOPY (4.09 ANGSTROMS)</scope>
    <scope>FUNCTION OF POL I</scope>
    <scope>SUBUNIT</scope>
    <scope>SUBCELLULAR LOCATION</scope>
</reference>
<organism>
    <name type="scientific">Homo sapiens</name>
    <name type="common">Human</name>
    <dbReference type="NCBI Taxonomy" id="9606"/>
    <lineage>
        <taxon>Eukaryota</taxon>
        <taxon>Metazoa</taxon>
        <taxon>Chordata</taxon>
        <taxon>Craniata</taxon>
        <taxon>Vertebrata</taxon>
        <taxon>Euteleostomi</taxon>
        <taxon>Mammalia</taxon>
        <taxon>Eutheria</taxon>
        <taxon>Euarchontoglires</taxon>
        <taxon>Primates</taxon>
        <taxon>Haplorrhini</taxon>
        <taxon>Catarrhini</taxon>
        <taxon>Hominidae</taxon>
        <taxon>Homo</taxon>
    </lineage>
</organism>
<keyword id="KW-0002">3D-structure</keyword>
<keyword id="KW-0007">Acetylation</keyword>
<keyword id="KW-0903">Direct protein sequencing</keyword>
<keyword id="KW-0240">DNA-directed RNA polymerase</keyword>
<keyword id="KW-0945">Host-virus interaction</keyword>
<keyword id="KW-1017">Isopeptide bond</keyword>
<keyword id="KW-0539">Nucleus</keyword>
<keyword id="KW-1267">Proteomics identification</keyword>
<keyword id="KW-1185">Reference proteome</keyword>
<keyword id="KW-0804">Transcription</keyword>
<keyword id="KW-0832">Ubl conjugation</keyword>
<proteinExistence type="evidence at protein level"/>
<sequence>MDDEEETYRLWKIRKTIMQLCHDRGYLVTQDELDQTLEEFKAQSGDKPSEGRPRRTDLTVLVAHNDDPTDQMFVFFPEEPKVGIKTIKVYCQRMQEENITRALIVVQQGMTPSAKQSLVDMAPKYILEQFLQQELLINITEHELVPEHVVMTKEEVTELLARYKLRENQLPRIQAGDPVARYFGIKRGQVVKIIRPSETAGRYITYRLVQ</sequence>
<dbReference type="EMBL" id="J04965">
    <property type="protein sequence ID" value="AAA62401.1"/>
    <property type="status" value="ALT_SEQ"/>
    <property type="molecule type" value="mRNA"/>
</dbReference>
<dbReference type="EMBL" id="S42643">
    <property type="protein sequence ID" value="AAB19339.1"/>
    <property type="molecule type" value="mRNA"/>
</dbReference>
<dbReference type="EMBL" id="D38251">
    <property type="protein sequence ID" value="BAA07406.1"/>
    <property type="molecule type" value="mRNA"/>
</dbReference>
<dbReference type="EMBL" id="AK312625">
    <property type="protein sequence ID" value="BAG35511.1"/>
    <property type="molecule type" value="mRNA"/>
</dbReference>
<dbReference type="EMBL" id="AC004151">
    <property type="protein sequence ID" value="AAC03238.1"/>
    <property type="molecule type" value="Genomic_DNA"/>
</dbReference>
<dbReference type="EMBL" id="CH471139">
    <property type="protein sequence ID" value="EAW69548.1"/>
    <property type="molecule type" value="Genomic_DNA"/>
</dbReference>
<dbReference type="EMBL" id="CH471139">
    <property type="protein sequence ID" value="EAW69549.1"/>
    <property type="molecule type" value="Genomic_DNA"/>
</dbReference>
<dbReference type="EMBL" id="BC004441">
    <property type="protein sequence ID" value="AAH04441.1"/>
    <property type="molecule type" value="mRNA"/>
</dbReference>
<dbReference type="EMBL" id="BC034144">
    <property type="protein sequence ID" value="AAH34144.1"/>
    <property type="molecule type" value="mRNA"/>
</dbReference>
<dbReference type="CCDS" id="CCDS12056.1"/>
<dbReference type="PIR" id="S52002">
    <property type="entry name" value="A32618"/>
</dbReference>
<dbReference type="RefSeq" id="NP_002686.2">
    <property type="nucleotide sequence ID" value="NM_002695.3"/>
</dbReference>
<dbReference type="PDB" id="5IY6">
    <property type="method" value="EM"/>
    <property type="resolution" value="7.20 A"/>
    <property type="chains" value="E=1-210"/>
</dbReference>
<dbReference type="PDB" id="5IY7">
    <property type="method" value="EM"/>
    <property type="resolution" value="8.60 A"/>
    <property type="chains" value="E=1-210"/>
</dbReference>
<dbReference type="PDB" id="5IY8">
    <property type="method" value="EM"/>
    <property type="resolution" value="7.90 A"/>
    <property type="chains" value="E=1-210"/>
</dbReference>
<dbReference type="PDB" id="5IY9">
    <property type="method" value="EM"/>
    <property type="resolution" value="6.30 A"/>
    <property type="chains" value="E=1-210"/>
</dbReference>
<dbReference type="PDB" id="5IYA">
    <property type="method" value="EM"/>
    <property type="resolution" value="5.40 A"/>
    <property type="chains" value="E=1-210"/>
</dbReference>
<dbReference type="PDB" id="5IYB">
    <property type="method" value="EM"/>
    <property type="resolution" value="3.90 A"/>
    <property type="chains" value="E=1-210"/>
</dbReference>
<dbReference type="PDB" id="5IYC">
    <property type="method" value="EM"/>
    <property type="resolution" value="3.90 A"/>
    <property type="chains" value="E=1-210"/>
</dbReference>
<dbReference type="PDB" id="5IYD">
    <property type="method" value="EM"/>
    <property type="resolution" value="3.90 A"/>
    <property type="chains" value="E=1-210"/>
</dbReference>
<dbReference type="PDB" id="6DRD">
    <property type="method" value="EM"/>
    <property type="resolution" value="3.90 A"/>
    <property type="chains" value="E=1-210"/>
</dbReference>
<dbReference type="PDB" id="6O9L">
    <property type="method" value="EM"/>
    <property type="resolution" value="7.20 A"/>
    <property type="chains" value="E=1-210"/>
</dbReference>
<dbReference type="PDB" id="6XRE">
    <property type="method" value="EM"/>
    <property type="resolution" value="4.60 A"/>
    <property type="chains" value="E=1-210"/>
</dbReference>
<dbReference type="PDB" id="7A6H">
    <property type="method" value="EM"/>
    <property type="resolution" value="3.30 A"/>
    <property type="chains" value="E=1-210"/>
</dbReference>
<dbReference type="PDB" id="7AE1">
    <property type="method" value="EM"/>
    <property type="resolution" value="2.80 A"/>
    <property type="chains" value="E=1-210"/>
</dbReference>
<dbReference type="PDB" id="7AE3">
    <property type="method" value="EM"/>
    <property type="resolution" value="3.10 A"/>
    <property type="chains" value="E=1-210"/>
</dbReference>
<dbReference type="PDB" id="7AEA">
    <property type="method" value="EM"/>
    <property type="resolution" value="3.40 A"/>
    <property type="chains" value="E=1-210"/>
</dbReference>
<dbReference type="PDB" id="7AST">
    <property type="method" value="EM"/>
    <property type="resolution" value="4.00 A"/>
    <property type="chains" value="F=1-210"/>
</dbReference>
<dbReference type="PDB" id="7D58">
    <property type="method" value="EM"/>
    <property type="resolution" value="2.90 A"/>
    <property type="chains" value="E=1-210"/>
</dbReference>
<dbReference type="PDB" id="7D59">
    <property type="method" value="EM"/>
    <property type="resolution" value="3.10 A"/>
    <property type="chains" value="E=1-210"/>
</dbReference>
<dbReference type="PDB" id="7DN3">
    <property type="method" value="EM"/>
    <property type="resolution" value="3.50 A"/>
    <property type="chains" value="E=1-210"/>
</dbReference>
<dbReference type="PDB" id="7DU2">
    <property type="method" value="EM"/>
    <property type="resolution" value="3.35 A"/>
    <property type="chains" value="E=1-210"/>
</dbReference>
<dbReference type="PDB" id="7FJI">
    <property type="method" value="EM"/>
    <property type="resolution" value="3.60 A"/>
    <property type="chains" value="E=1-210"/>
</dbReference>
<dbReference type="PDB" id="7FJJ">
    <property type="method" value="EM"/>
    <property type="resolution" value="3.60 A"/>
    <property type="chains" value="E=1-210"/>
</dbReference>
<dbReference type="PDB" id="7LBM">
    <property type="method" value="EM"/>
    <property type="resolution" value="4.80 A"/>
    <property type="chains" value="E=1-210"/>
</dbReference>
<dbReference type="PDB" id="7OB9">
    <property type="method" value="EM"/>
    <property type="resolution" value="2.70 A"/>
    <property type="chains" value="E=1-210"/>
</dbReference>
<dbReference type="PDB" id="7OBA">
    <property type="method" value="EM"/>
    <property type="resolution" value="3.10 A"/>
    <property type="chains" value="E=1-210"/>
</dbReference>
<dbReference type="PDB" id="7OBB">
    <property type="method" value="EM"/>
    <property type="resolution" value="3.30 A"/>
    <property type="chains" value="E=1-210"/>
</dbReference>
<dbReference type="PDB" id="7VBA">
    <property type="method" value="EM"/>
    <property type="resolution" value="2.89 A"/>
    <property type="chains" value="E=1-210"/>
</dbReference>
<dbReference type="PDB" id="7VBB">
    <property type="method" value="EM"/>
    <property type="resolution" value="2.81 A"/>
    <property type="chains" value="E=1-210"/>
</dbReference>
<dbReference type="PDB" id="7VBC">
    <property type="method" value="EM"/>
    <property type="resolution" value="3.01 A"/>
    <property type="chains" value="E=1-210"/>
</dbReference>
<dbReference type="PDB" id="8A43">
    <property type="method" value="EM"/>
    <property type="resolution" value="4.09 A"/>
    <property type="chains" value="E=1-210"/>
</dbReference>
<dbReference type="PDB" id="8ITY">
    <property type="method" value="EM"/>
    <property type="resolution" value="3.90 A"/>
    <property type="chains" value="E=1-210"/>
</dbReference>
<dbReference type="PDB" id="8IUE">
    <property type="method" value="EM"/>
    <property type="resolution" value="4.10 A"/>
    <property type="chains" value="E=1-210"/>
</dbReference>
<dbReference type="PDB" id="8IUH">
    <property type="method" value="EM"/>
    <property type="resolution" value="3.40 A"/>
    <property type="chains" value="E=1-210"/>
</dbReference>
<dbReference type="PDB" id="9EHZ">
    <property type="method" value="EM"/>
    <property type="resolution" value="2.60 A"/>
    <property type="chains" value="E=1-210"/>
</dbReference>
<dbReference type="PDB" id="9EI1">
    <property type="method" value="EM"/>
    <property type="resolution" value="3.20 A"/>
    <property type="chains" value="E=1-210"/>
</dbReference>
<dbReference type="PDB" id="9EI3">
    <property type="method" value="EM"/>
    <property type="resolution" value="3.20 A"/>
    <property type="chains" value="E=1-210"/>
</dbReference>
<dbReference type="PDB" id="9EI4">
    <property type="method" value="EM"/>
    <property type="resolution" value="3.70 A"/>
    <property type="chains" value="E=1-210"/>
</dbReference>
<dbReference type="PDB" id="9FSO">
    <property type="method" value="EM"/>
    <property type="resolution" value="3.28 A"/>
    <property type="chains" value="M=1-210"/>
</dbReference>
<dbReference type="PDB" id="9FSP">
    <property type="method" value="EM"/>
    <property type="resolution" value="3.39 A"/>
    <property type="chains" value="M=1-210"/>
</dbReference>
<dbReference type="PDB" id="9FSQ">
    <property type="method" value="EM"/>
    <property type="resolution" value="3.51 A"/>
    <property type="chains" value="M=1-210"/>
</dbReference>
<dbReference type="PDB" id="9FSR">
    <property type="method" value="EM"/>
    <property type="resolution" value="3.76 A"/>
    <property type="chains" value="M=1-210"/>
</dbReference>
<dbReference type="PDB" id="9FSS">
    <property type="method" value="EM"/>
    <property type="resolution" value="4.14 A"/>
    <property type="chains" value="M=1-210"/>
</dbReference>
<dbReference type="PDBsum" id="5IY6"/>
<dbReference type="PDBsum" id="5IY7"/>
<dbReference type="PDBsum" id="5IY8"/>
<dbReference type="PDBsum" id="5IY9"/>
<dbReference type="PDBsum" id="5IYA"/>
<dbReference type="PDBsum" id="5IYB"/>
<dbReference type="PDBsum" id="5IYC"/>
<dbReference type="PDBsum" id="5IYD"/>
<dbReference type="PDBsum" id="6DRD"/>
<dbReference type="PDBsum" id="6O9L"/>
<dbReference type="PDBsum" id="6XRE"/>
<dbReference type="PDBsum" id="7A6H"/>
<dbReference type="PDBsum" id="7AE1"/>
<dbReference type="PDBsum" id="7AE3"/>
<dbReference type="PDBsum" id="7AEA"/>
<dbReference type="PDBsum" id="7AST"/>
<dbReference type="PDBsum" id="7D58"/>
<dbReference type="PDBsum" id="7D59"/>
<dbReference type="PDBsum" id="7DN3"/>
<dbReference type="PDBsum" id="7DU2"/>
<dbReference type="PDBsum" id="7FJI"/>
<dbReference type="PDBsum" id="7FJJ"/>
<dbReference type="PDBsum" id="7LBM"/>
<dbReference type="PDBsum" id="7OB9"/>
<dbReference type="PDBsum" id="7OBA"/>
<dbReference type="PDBsum" id="7OBB"/>
<dbReference type="PDBsum" id="7VBA"/>
<dbReference type="PDBsum" id="7VBB"/>
<dbReference type="PDBsum" id="7VBC"/>
<dbReference type="PDBsum" id="8A43"/>
<dbReference type="PDBsum" id="8ITY"/>
<dbReference type="PDBsum" id="8IUE"/>
<dbReference type="PDBsum" id="8IUH"/>
<dbReference type="PDBsum" id="9EHZ"/>
<dbReference type="PDBsum" id="9EI1"/>
<dbReference type="PDBsum" id="9EI3"/>
<dbReference type="PDBsum" id="9EI4"/>
<dbReference type="PDBsum" id="9FSO"/>
<dbReference type="PDBsum" id="9FSP"/>
<dbReference type="PDBsum" id="9FSQ"/>
<dbReference type="PDBsum" id="9FSR"/>
<dbReference type="PDBsum" id="9FSS"/>
<dbReference type="EMDB" id="EMD-11673"/>
<dbReference type="EMDB" id="EMD-11736"/>
<dbReference type="EMDB" id="EMD-11738"/>
<dbReference type="EMDB" id="EMD-11742"/>
<dbReference type="EMDB" id="EMD-11904"/>
<dbReference type="EMDB" id="EMD-12795"/>
<dbReference type="EMDB" id="EMD-12796"/>
<dbReference type="EMDB" id="EMD-12797"/>
<dbReference type="EMDB" id="EMD-15135"/>
<dbReference type="EMDB" id="EMD-22294"/>
<dbReference type="EMDB" id="EMD-23255"/>
<dbReference type="EMDB" id="EMD-30577"/>
<dbReference type="EMDB" id="EMD-30578"/>
<dbReference type="EMDB" id="EMD-30779"/>
<dbReference type="EMDB" id="EMD-30865"/>
<dbReference type="EMDB" id="EMD-31621"/>
<dbReference type="EMDB" id="EMD-31622"/>
<dbReference type="EMDB" id="EMD-31876"/>
<dbReference type="EMDB" id="EMD-31877"/>
<dbReference type="EMDB" id="EMD-31878"/>
<dbReference type="EMDB" id="EMD-35712"/>
<dbReference type="EMDB" id="EMD-35719"/>
<dbReference type="EMDB" id="EMD-35722"/>
<dbReference type="EMDB" id="EMD-48071"/>
<dbReference type="EMDB" id="EMD-48073"/>
<dbReference type="EMDB" id="EMD-48075"/>
<dbReference type="EMDB" id="EMD-48076"/>
<dbReference type="EMDB" id="EMD-50730"/>
<dbReference type="EMDB" id="EMD-50731"/>
<dbReference type="EMDB" id="EMD-50732"/>
<dbReference type="EMDB" id="EMD-50733"/>
<dbReference type="EMDB" id="EMD-50734"/>
<dbReference type="EMDB" id="EMD-7997"/>
<dbReference type="EMDB" id="EMD-8132"/>
<dbReference type="EMDB" id="EMD-8133"/>
<dbReference type="EMDB" id="EMD-8134"/>
<dbReference type="EMDB" id="EMD-8135"/>
<dbReference type="EMDB" id="EMD-8136"/>
<dbReference type="EMDB" id="EMD-8137"/>
<dbReference type="EMDB" id="EMD-8138"/>
<dbReference type="SMR" id="P19388"/>
<dbReference type="BioGRID" id="111430">
    <property type="interactions" value="294"/>
</dbReference>
<dbReference type="ComplexPortal" id="CPX-2386">
    <property type="entry name" value="DNA-directed RNA polymerase I complex"/>
</dbReference>
<dbReference type="ComplexPortal" id="CPX-2387">
    <property type="entry name" value="DNA-directed RNA polymerase II complex, Pol II(G) variant"/>
</dbReference>
<dbReference type="ComplexPortal" id="CPX-2393">
    <property type="entry name" value="DNA-directed RNA polymerase III complex, POLR3G variant"/>
</dbReference>
<dbReference type="ComplexPortal" id="CPX-6145">
    <property type="entry name" value="PAQosome co-chaperone complex"/>
</dbReference>
<dbReference type="ComplexPortal" id="CPX-7481">
    <property type="entry name" value="DNA-directed RNA polymerase II complex"/>
</dbReference>
<dbReference type="ComplexPortal" id="CPX-7482">
    <property type="entry name" value="DNA-directed RNA polymerase III complex, POLR3GL variant"/>
</dbReference>
<dbReference type="CORUM" id="P19388"/>
<dbReference type="DIP" id="DIP-56N"/>
<dbReference type="FunCoup" id="P19388">
    <property type="interactions" value="3022"/>
</dbReference>
<dbReference type="IntAct" id="P19388">
    <property type="interactions" value="217"/>
</dbReference>
<dbReference type="MINT" id="P19388"/>
<dbReference type="STRING" id="9606.ENSP00000478303"/>
<dbReference type="GlyGen" id="P19388">
    <property type="glycosylation" value="1 site, 1 O-linked glycan (1 site)"/>
</dbReference>
<dbReference type="iPTMnet" id="P19388"/>
<dbReference type="MetOSite" id="P19388"/>
<dbReference type="PhosphoSitePlus" id="P19388"/>
<dbReference type="BioMuta" id="POLR2E"/>
<dbReference type="DMDM" id="116242767"/>
<dbReference type="REPRODUCTION-2DPAGE" id="IPI00291093"/>
<dbReference type="jPOST" id="P19388"/>
<dbReference type="MassIVE" id="P19388"/>
<dbReference type="PaxDb" id="9606-ENSP00000478303"/>
<dbReference type="PeptideAtlas" id="P19388"/>
<dbReference type="ProteomicsDB" id="53653"/>
<dbReference type="Pumba" id="P19388"/>
<dbReference type="TopDownProteomics" id="P19388"/>
<dbReference type="Antibodypedia" id="22550">
    <property type="antibodies" value="316 antibodies from 29 providers"/>
</dbReference>
<dbReference type="DNASU" id="5434"/>
<dbReference type="Ensembl" id="ENST00000586746.5">
    <property type="protein sequence ID" value="ENSP00000464739.1"/>
    <property type="gene ID" value="ENSG00000099817.12"/>
</dbReference>
<dbReference type="Ensembl" id="ENST00000612655.4">
    <property type="protein sequence ID" value="ENSP00000485021.1"/>
    <property type="gene ID" value="ENSG00000099817.12"/>
</dbReference>
<dbReference type="Ensembl" id="ENST00000615234.5">
    <property type="protein sequence ID" value="ENSP00000478303.1"/>
    <property type="gene ID" value="ENSG00000099817.12"/>
</dbReference>
<dbReference type="GeneID" id="5434"/>
<dbReference type="KEGG" id="hsa:5434"/>
<dbReference type="MANE-Select" id="ENST00000615234.5">
    <property type="protein sequence ID" value="ENSP00000478303.1"/>
    <property type="RefSeq nucleotide sequence ID" value="NM_002695.5"/>
    <property type="RefSeq protein sequence ID" value="NP_002686.3"/>
</dbReference>
<dbReference type="UCSC" id="uc002lre.5">
    <property type="organism name" value="human"/>
</dbReference>
<dbReference type="AGR" id="HGNC:9192"/>
<dbReference type="CTD" id="5434"/>
<dbReference type="DisGeNET" id="5434"/>
<dbReference type="GeneCards" id="POLR2E"/>
<dbReference type="HGNC" id="HGNC:9192">
    <property type="gene designation" value="POLR2E"/>
</dbReference>
<dbReference type="HPA" id="ENSG00000099817">
    <property type="expression patterns" value="Low tissue specificity"/>
</dbReference>
<dbReference type="MIM" id="180664">
    <property type="type" value="gene"/>
</dbReference>
<dbReference type="neXtProt" id="NX_P19388"/>
<dbReference type="OpenTargets" id="ENSG00000099817"/>
<dbReference type="PharmGKB" id="PA33512"/>
<dbReference type="VEuPathDB" id="HostDB:ENSG00000099817"/>
<dbReference type="eggNOG" id="KOG3218">
    <property type="taxonomic scope" value="Eukaryota"/>
</dbReference>
<dbReference type="GeneTree" id="ENSGT00390000013841"/>
<dbReference type="HOGENOM" id="CLU_058320_0_1_1"/>
<dbReference type="InParanoid" id="P19388"/>
<dbReference type="OMA" id="VRDRGYF"/>
<dbReference type="OrthoDB" id="248779at2759"/>
<dbReference type="PAN-GO" id="P19388">
    <property type="GO annotations" value="4 GO annotations based on evolutionary models"/>
</dbReference>
<dbReference type="PhylomeDB" id="P19388"/>
<dbReference type="PathwayCommons" id="P19388"/>
<dbReference type="Reactome" id="R-HSA-112382">
    <property type="pathway name" value="Formation of RNA Pol II elongation complex"/>
</dbReference>
<dbReference type="Reactome" id="R-HSA-113418">
    <property type="pathway name" value="Formation of the Early Elongation Complex"/>
</dbReference>
<dbReference type="Reactome" id="R-HSA-167152">
    <property type="pathway name" value="Formation of HIV elongation complex in the absence of HIV Tat"/>
</dbReference>
<dbReference type="Reactome" id="R-HSA-167158">
    <property type="pathway name" value="Formation of the HIV-1 Early Elongation Complex"/>
</dbReference>
<dbReference type="Reactome" id="R-HSA-167160">
    <property type="pathway name" value="RNA Pol II CTD phosphorylation and interaction with CE during HIV infection"/>
</dbReference>
<dbReference type="Reactome" id="R-HSA-167161">
    <property type="pathway name" value="HIV Transcription Initiation"/>
</dbReference>
<dbReference type="Reactome" id="R-HSA-167162">
    <property type="pathway name" value="RNA Polymerase II HIV Promoter Escape"/>
</dbReference>
<dbReference type="Reactome" id="R-HSA-167172">
    <property type="pathway name" value="Transcription of the HIV genome"/>
</dbReference>
<dbReference type="Reactome" id="R-HSA-167200">
    <property type="pathway name" value="Formation of HIV-1 elongation complex containing HIV-1 Tat"/>
</dbReference>
<dbReference type="Reactome" id="R-HSA-167238">
    <property type="pathway name" value="Pausing and recovery of Tat-mediated HIV elongation"/>
</dbReference>
<dbReference type="Reactome" id="R-HSA-167242">
    <property type="pathway name" value="Abortive elongation of HIV-1 transcript in the absence of Tat"/>
</dbReference>
<dbReference type="Reactome" id="R-HSA-167243">
    <property type="pathway name" value="Tat-mediated HIV elongation arrest and recovery"/>
</dbReference>
<dbReference type="Reactome" id="R-HSA-167246">
    <property type="pathway name" value="Tat-mediated elongation of the HIV-1 transcript"/>
</dbReference>
<dbReference type="Reactome" id="R-HSA-167287">
    <property type="pathway name" value="HIV elongation arrest and recovery"/>
</dbReference>
<dbReference type="Reactome" id="R-HSA-167290">
    <property type="pathway name" value="Pausing and recovery of HIV elongation"/>
</dbReference>
<dbReference type="Reactome" id="R-HSA-168325">
    <property type="pathway name" value="Viral Messenger RNA Synthesis"/>
</dbReference>
<dbReference type="Reactome" id="R-HSA-1834949">
    <property type="pathway name" value="Cytosolic sensors of pathogen-associated DNA"/>
</dbReference>
<dbReference type="Reactome" id="R-HSA-203927">
    <property type="pathway name" value="MicroRNA (miRNA) biogenesis"/>
</dbReference>
<dbReference type="Reactome" id="R-HSA-427413">
    <property type="pathway name" value="NoRC negatively regulates rRNA expression"/>
</dbReference>
<dbReference type="Reactome" id="R-HSA-5250924">
    <property type="pathway name" value="B-WICH complex positively regulates rRNA expression"/>
</dbReference>
<dbReference type="Reactome" id="R-HSA-5578749">
    <property type="pathway name" value="Transcriptional regulation by small RNAs"/>
</dbReference>
<dbReference type="Reactome" id="R-HSA-5601884">
    <property type="pathway name" value="PIWI-interacting RNA (piRNA) biogenesis"/>
</dbReference>
<dbReference type="Reactome" id="R-HSA-5617472">
    <property type="pathway name" value="Activation of anterior HOX genes in hindbrain development during early embryogenesis"/>
</dbReference>
<dbReference type="Reactome" id="R-HSA-674695">
    <property type="pathway name" value="RNA Polymerase II Pre-transcription Events"/>
</dbReference>
<dbReference type="Reactome" id="R-HSA-6781823">
    <property type="pathway name" value="Formation of TC-NER Pre-Incision Complex"/>
</dbReference>
<dbReference type="Reactome" id="R-HSA-6781827">
    <property type="pathway name" value="Transcription-Coupled Nucleotide Excision Repair (TC-NER)"/>
</dbReference>
<dbReference type="Reactome" id="R-HSA-6782135">
    <property type="pathway name" value="Dual incision in TC-NER"/>
</dbReference>
<dbReference type="Reactome" id="R-HSA-6782210">
    <property type="pathway name" value="Gap-filling DNA repair synthesis and ligation in TC-NER"/>
</dbReference>
<dbReference type="Reactome" id="R-HSA-6796648">
    <property type="pathway name" value="TP53 Regulates Transcription of DNA Repair Genes"/>
</dbReference>
<dbReference type="Reactome" id="R-HSA-6803529">
    <property type="pathway name" value="FGFR2 alternative splicing"/>
</dbReference>
<dbReference type="Reactome" id="R-HSA-6807505">
    <property type="pathway name" value="RNA polymerase II transcribes snRNA genes"/>
</dbReference>
<dbReference type="Reactome" id="R-HSA-72086">
    <property type="pathway name" value="mRNA Capping"/>
</dbReference>
<dbReference type="Reactome" id="R-HSA-72163">
    <property type="pathway name" value="mRNA Splicing - Major Pathway"/>
</dbReference>
<dbReference type="Reactome" id="R-HSA-72165">
    <property type="pathway name" value="mRNA Splicing - Minor Pathway"/>
</dbReference>
<dbReference type="Reactome" id="R-HSA-72203">
    <property type="pathway name" value="Processing of Capped Intron-Containing Pre-mRNA"/>
</dbReference>
<dbReference type="Reactome" id="R-HSA-73762">
    <property type="pathway name" value="RNA Polymerase I Transcription Initiation"/>
</dbReference>
<dbReference type="Reactome" id="R-HSA-73772">
    <property type="pathway name" value="RNA Polymerase I Promoter Escape"/>
</dbReference>
<dbReference type="Reactome" id="R-HSA-73776">
    <property type="pathway name" value="RNA Polymerase II Promoter Escape"/>
</dbReference>
<dbReference type="Reactome" id="R-HSA-73779">
    <property type="pathway name" value="RNA Polymerase II Transcription Pre-Initiation And Promoter Opening"/>
</dbReference>
<dbReference type="Reactome" id="R-HSA-73780">
    <property type="pathway name" value="RNA Polymerase III Chain Elongation"/>
</dbReference>
<dbReference type="Reactome" id="R-HSA-73863">
    <property type="pathway name" value="RNA Polymerase I Transcription Termination"/>
</dbReference>
<dbReference type="Reactome" id="R-HSA-73980">
    <property type="pathway name" value="RNA Polymerase III Transcription Termination"/>
</dbReference>
<dbReference type="Reactome" id="R-HSA-749476">
    <property type="pathway name" value="RNA Polymerase III Abortive And Retractive Initiation"/>
</dbReference>
<dbReference type="Reactome" id="R-HSA-75953">
    <property type="pathway name" value="RNA Polymerase II Transcription Initiation"/>
</dbReference>
<dbReference type="Reactome" id="R-HSA-75955">
    <property type="pathway name" value="RNA Polymerase II Transcription Elongation"/>
</dbReference>
<dbReference type="Reactome" id="R-HSA-76042">
    <property type="pathway name" value="RNA Polymerase II Transcription Initiation And Promoter Clearance"/>
</dbReference>
<dbReference type="Reactome" id="R-HSA-76061">
    <property type="pathway name" value="RNA Polymerase III Transcription Initiation From Type 1 Promoter"/>
</dbReference>
<dbReference type="Reactome" id="R-HSA-76066">
    <property type="pathway name" value="RNA Polymerase III Transcription Initiation From Type 2 Promoter"/>
</dbReference>
<dbReference type="Reactome" id="R-HSA-76071">
    <property type="pathway name" value="RNA Polymerase III Transcription Initiation From Type 3 Promoter"/>
</dbReference>
<dbReference type="Reactome" id="R-HSA-77075">
    <property type="pathway name" value="RNA Pol II CTD phosphorylation and interaction with CE"/>
</dbReference>
<dbReference type="Reactome" id="R-HSA-8851708">
    <property type="pathway name" value="Signaling by FGFR2 IIIa TM"/>
</dbReference>
<dbReference type="Reactome" id="R-HSA-9018519">
    <property type="pathway name" value="Estrogen-dependent gene expression"/>
</dbReference>
<dbReference type="Reactome" id="R-HSA-9670095">
    <property type="pathway name" value="Inhibition of DNA recombination at telomere"/>
</dbReference>
<dbReference type="SignaLink" id="P19388"/>
<dbReference type="SIGNOR" id="P19388"/>
<dbReference type="BioGRID-ORCS" id="5434">
    <property type="hits" value="834 hits in 1141 CRISPR screens"/>
</dbReference>
<dbReference type="CD-CODE" id="91857CE7">
    <property type="entry name" value="Nucleolus"/>
</dbReference>
<dbReference type="ChiTaRS" id="POLR2E">
    <property type="organism name" value="human"/>
</dbReference>
<dbReference type="EvolutionaryTrace" id="P19388"/>
<dbReference type="GeneWiki" id="POLR2E"/>
<dbReference type="GenomeRNAi" id="5434"/>
<dbReference type="Pharos" id="P19388">
    <property type="development level" value="Tbio"/>
</dbReference>
<dbReference type="PRO" id="PR:P19388"/>
<dbReference type="Proteomes" id="UP000005640">
    <property type="component" value="Chromosome 19"/>
</dbReference>
<dbReference type="RNAct" id="P19388">
    <property type="molecule type" value="protein"/>
</dbReference>
<dbReference type="Bgee" id="ENSG00000099817">
    <property type="expression patterns" value="Expressed in stromal cell of endometrium and 214 other cell types or tissues"/>
</dbReference>
<dbReference type="ExpressionAtlas" id="P19388">
    <property type="expression patterns" value="baseline and differential"/>
</dbReference>
<dbReference type="GO" id="GO:0005829">
    <property type="term" value="C:cytosol"/>
    <property type="evidence" value="ECO:0000304"/>
    <property type="project" value="Reactome"/>
</dbReference>
<dbReference type="GO" id="GO:0005654">
    <property type="term" value="C:nucleoplasm"/>
    <property type="evidence" value="ECO:0000314"/>
    <property type="project" value="HPA"/>
</dbReference>
<dbReference type="GO" id="GO:0005634">
    <property type="term" value="C:nucleus"/>
    <property type="evidence" value="ECO:0000314"/>
    <property type="project" value="UniProtKB"/>
</dbReference>
<dbReference type="GO" id="GO:0005736">
    <property type="term" value="C:RNA polymerase I complex"/>
    <property type="evidence" value="ECO:0000314"/>
    <property type="project" value="UniProtKB"/>
</dbReference>
<dbReference type="GO" id="GO:0005665">
    <property type="term" value="C:RNA polymerase II, core complex"/>
    <property type="evidence" value="ECO:0000314"/>
    <property type="project" value="UniProtKB"/>
</dbReference>
<dbReference type="GO" id="GO:0005666">
    <property type="term" value="C:RNA polymerase III complex"/>
    <property type="evidence" value="ECO:0000314"/>
    <property type="project" value="UniProtKB"/>
</dbReference>
<dbReference type="GO" id="GO:1990062">
    <property type="term" value="C:RPAP3/R2TP/prefoldin-like complex"/>
    <property type="evidence" value="ECO:0000353"/>
    <property type="project" value="ComplexPortal"/>
</dbReference>
<dbReference type="GO" id="GO:0003677">
    <property type="term" value="F:DNA binding"/>
    <property type="evidence" value="ECO:0007669"/>
    <property type="project" value="InterPro"/>
</dbReference>
<dbReference type="GO" id="GO:0003899">
    <property type="term" value="F:DNA-directed RNA polymerase activity"/>
    <property type="evidence" value="ECO:0000304"/>
    <property type="project" value="ProtInc"/>
</dbReference>
<dbReference type="GO" id="GO:0050821">
    <property type="term" value="P:protein stabilization"/>
    <property type="evidence" value="ECO:0000303"/>
    <property type="project" value="ComplexPortal"/>
</dbReference>
<dbReference type="GO" id="GO:0006366">
    <property type="term" value="P:transcription by RNA polymerase II"/>
    <property type="evidence" value="ECO:0000314"/>
    <property type="project" value="UniProtKB"/>
</dbReference>
<dbReference type="GO" id="GO:0006362">
    <property type="term" value="P:transcription elongation by RNA polymerase I"/>
    <property type="evidence" value="ECO:0000318"/>
    <property type="project" value="GO_Central"/>
</dbReference>
<dbReference type="GO" id="GO:0042797">
    <property type="term" value="P:tRNA transcription by RNA polymerase III"/>
    <property type="evidence" value="ECO:0000318"/>
    <property type="project" value="GO_Central"/>
</dbReference>
<dbReference type="FunFam" id="3.40.1340.10:FF:000001">
    <property type="entry name" value="DNA-directed RNA polymerases I, II, and III subunit RPABC1"/>
    <property type="match status" value="1"/>
</dbReference>
<dbReference type="FunFam" id="3.90.940.20:FF:000001">
    <property type="entry name" value="DNA-directed RNA polymerases I, II, and III subunit RPABC1"/>
    <property type="match status" value="1"/>
</dbReference>
<dbReference type="Gene3D" id="3.40.1340.10">
    <property type="entry name" value="RNA polymerase, Rpb5, N-terminal domain"/>
    <property type="match status" value="1"/>
</dbReference>
<dbReference type="Gene3D" id="3.90.940.20">
    <property type="entry name" value="RPB5-like RNA polymerase subunit"/>
    <property type="match status" value="1"/>
</dbReference>
<dbReference type="HAMAP" id="MF_00025">
    <property type="entry name" value="RNApol_Rpo5_RPB5"/>
    <property type="match status" value="1"/>
</dbReference>
<dbReference type="InterPro" id="IPR014381">
    <property type="entry name" value="Arch_Rpo5/euc_Rpb5"/>
</dbReference>
<dbReference type="InterPro" id="IPR005571">
    <property type="entry name" value="RNA_pol_Rpb5_N"/>
</dbReference>
<dbReference type="InterPro" id="IPR036710">
    <property type="entry name" value="RNA_pol_Rpb5_N_sf"/>
</dbReference>
<dbReference type="InterPro" id="IPR000783">
    <property type="entry name" value="RNA_pol_subH/Rpb5_C"/>
</dbReference>
<dbReference type="InterPro" id="IPR020608">
    <property type="entry name" value="RNA_pol_subH/Rpb5_CS"/>
</dbReference>
<dbReference type="InterPro" id="IPR035913">
    <property type="entry name" value="RPB5-like_sf"/>
</dbReference>
<dbReference type="NCBIfam" id="NF007129">
    <property type="entry name" value="PRK09570.1"/>
    <property type="match status" value="1"/>
</dbReference>
<dbReference type="PANTHER" id="PTHR10535">
    <property type="entry name" value="DNA-DIRECTED RNA POLYMERASES I, II, AND III SUBUNIT RPABC1"/>
    <property type="match status" value="1"/>
</dbReference>
<dbReference type="PANTHER" id="PTHR10535:SF0">
    <property type="entry name" value="DNA-DIRECTED RNA POLYMERASES I, II, AND III SUBUNIT RPABC1"/>
    <property type="match status" value="1"/>
</dbReference>
<dbReference type="Pfam" id="PF01191">
    <property type="entry name" value="RNA_pol_Rpb5_C"/>
    <property type="match status" value="1"/>
</dbReference>
<dbReference type="Pfam" id="PF03871">
    <property type="entry name" value="RNA_pol_Rpb5_N"/>
    <property type="match status" value="1"/>
</dbReference>
<dbReference type="PIRSF" id="PIRSF000747">
    <property type="entry name" value="RPB5"/>
    <property type="match status" value="1"/>
</dbReference>
<dbReference type="SUPFAM" id="SSF53036">
    <property type="entry name" value="Eukaryotic RPB5 N-terminal domain"/>
    <property type="match status" value="1"/>
</dbReference>
<dbReference type="SUPFAM" id="SSF55287">
    <property type="entry name" value="RPB5-like RNA polymerase subunit"/>
    <property type="match status" value="1"/>
</dbReference>
<dbReference type="PROSITE" id="PS01110">
    <property type="entry name" value="RNA_POL_H_23KD"/>
    <property type="match status" value="1"/>
</dbReference>
<comment type="function">
    <text evidence="1 4 5 6 8 14 16 17 20">DNA-dependent RNA polymerase catalyzes the transcription of DNA into RNA using the four ribonucleoside triphosphates as substrates. Common component of RNA polymerases I, II and III which synthesize ribosomal RNA precursors, mRNA precursors and many functional non-coding RNAs, and small RNAs, such as 5S rRNA and tRNAs, respectively. Pol II is the central component of the basal RNA polymerase II transcription machinery. Pols are composed of mobile elements that move relative to each other. In Pol II, POLR2E/RPABC1 is part of the lower jaw surrounding the central large cleft and thought to grab the incoming DNA template.</text>
</comment>
<comment type="subunit">
    <text evidence="4 6 8 9 10 11 12 13 14 15 16 17 19 20">Component of the RNA polymerase I (Pol I), RNA polymerase II (Pol II) and RNA polymerase III (Pol III) complexes consisting of at least 13, 12 and 17 subunits, respectively (PubMed:16809778, PubMed:33335104, PubMed:33558764, PubMed:33558766, PubMed:33674783, PubMed:34675218, PubMed:9852112). Pol I complex consists of a ten-subunit catalytic core composed of POLR1A/RPA1, POLR1B/RPA2, POLR1C/RPAC1, POLR1D/RPAC2, POLR1H/RPA12, POLR2E/RPABC1, POLR2F/RPABC2, POLR2H/RPABC3, POLR2K/RPABC4 and POLR2L/RPABC5; a mobile stalk subunit POLR1F/RPA43 protruding from the core and additional subunits homologous to general transcription factors POLR1E/RPA49 and POLR1G/RPA34. Part of Pol I pre-initiation complex (PIC), in which Pol I core assembles with RRN3 and promoter-bound UTBF and SL1/TIF-IB complex (PubMed:34671025, PubMed:34887565, PubMed:36271492). Pol II complex contains a ten-subunit catalytic core composed of POLR2A/RPB1, POLR2B/RPB2, POLR2C/RPB3, POLR2I/RPB9, POLR2J/RPB11, POLR2E/RPABC1, POLR2F/RPABC2, POLR2H/RPABC3, POLR2K/RPABC4 and POLR2L/RPABC5 and a mobile stalk composed of two subunits POLR2D/RPB4 and POLR2G/RPB7. Part of Pol II(G) complex, in which Pol II core associates with an additional subunit POLR2M; unlike conventional Pol II, Pol II(G) functions as a transcriptional repressor. Part of TBP-based Pol II pre-initiation complex (PIC), in which Pol II core assembles with general transcription factors and other specific initiation factors including GTF2E1, GTF2E2, GTF2F1, GTF2F2, TCEA1, ERCC2, ERCC3, GTF2H2, GTF2H3, GTF2H4, GTF2H5, GTF2A1, GTF2A2, GTF2B and TBP; this large multi-subunit PIC complex mediates DNA unwinding and targets Pol II core to the transcription start site where the first phosphodiester bond forms. In Pol II complex, this subunit is present in 2-fold molar excess over the other subunits (PubMed:27193682, PubMed:30190596, PubMed:9852112). Pol III complex consists of a ten-subunit catalytic core composed of POLR3A/RPC1, POLR3B/RPC2, POLR1C/RPAC1, POLR1D/RPAC2, POLR3K/RPC10, POLR2E/RPABC1, POLR2F/RPABC2, POLR2H/RPABC3, POLR2K/RPABC4 and POLR2L/RPABC5; a mobile stalk composed of two subunits POLR3H/RPC8 and CRCP/RPC9, protruding from the core and functioning primarily in transcription initiation; and additional subunits homologous to general transcription factors of the RNA polymerase II machinery, POLR3C/RPC3-POLR3F/RPC6-POLR3G/RPC7 heterotrimer required for transcription initiation and POLR3D/RPC4-POLR3E/RPC5 heterodimer involved in both transcription initiation and termination (PubMed:33335104, PubMed:33558764, PubMed:33558766, PubMed:33674783, PubMed:34675218). Component of the PAQosome complex which is responsible for the biogenesis of several protein complexes and which consists of R2TP complex members RUVBL1, RUVBL2, RPAP3 and PIH1D1, URI complex members PFDN2, PFDN6, PDRG1, UXT and URI1 as well as ASDURF, POLR2E and DNAAF10/WDR92 (PubMed:31738558). Interacts with URI1 (PubMed:9819440).</text>
</comment>
<comment type="subunit">
    <text evidence="18">(Microbial infection) Interacts with HBV protein X.</text>
</comment>
<comment type="interaction">
    <interactant intactId="EBI-395189">
        <id>P19388</id>
    </interactant>
    <interactant intactId="EBI-11954292">
        <id>Q86V38</id>
        <label>ATN1</label>
    </interactant>
    <organismsDiffer>false</organismsDiffer>
    <experiments>3</experiments>
</comment>
<comment type="interaction">
    <interactant intactId="EBI-395189">
        <id>P19388</id>
    </interactant>
    <interactant intactId="EBI-6875961">
        <id>P02489</id>
        <label>CRYAA</label>
    </interactant>
    <organismsDiffer>false</organismsDiffer>
    <experiments>3</experiments>
</comment>
<comment type="interaction">
    <interactant intactId="EBI-395189">
        <id>P19388</id>
    </interactant>
    <interactant intactId="EBI-750300">
        <id>Q01658</id>
        <label>DR1</label>
    </interactant>
    <organismsDiffer>false</organismsDiffer>
    <experiments>3</experiments>
</comment>
<comment type="interaction">
    <interactant intactId="EBI-395189">
        <id>P19388</id>
    </interactant>
    <interactant intactId="EBI-356015">
        <id>Q14204</id>
        <label>DYNC1H1</label>
    </interactant>
    <organismsDiffer>false</organismsDiffer>
    <experiments>3</experiments>
</comment>
<comment type="interaction">
    <interactant intactId="EBI-395189">
        <id>P19388</id>
    </interactant>
    <interactant intactId="EBI-2565863">
        <id>P00488</id>
        <label>F13A1</label>
    </interactant>
    <organismsDiffer>false</organismsDiffer>
    <experiments>3</experiments>
</comment>
<comment type="interaction">
    <interactant intactId="EBI-395189">
        <id>P19388</id>
    </interactant>
    <interactant intactId="EBI-348399">
        <id>P22607</id>
        <label>FGFR3</label>
    </interactant>
    <organismsDiffer>false</organismsDiffer>
    <experiments>3</experiments>
</comment>
<comment type="interaction">
    <interactant intactId="EBI-395189">
        <id>P19388</id>
    </interactant>
    <interactant intactId="EBI-8285963">
        <id>Q14957</id>
        <label>GRIN2C</label>
    </interactant>
    <organismsDiffer>false</organismsDiffer>
    <experiments>3</experiments>
</comment>
<comment type="interaction">
    <interactant intactId="EBI-395189">
        <id>P19388</id>
    </interactant>
    <interactant intactId="EBI-389564">
        <id>Q00403</id>
        <label>GTF2B</label>
    </interactant>
    <organismsDiffer>false</organismsDiffer>
    <experiments>6</experiments>
</comment>
<comment type="interaction">
    <interactant intactId="EBI-395189">
        <id>P19388</id>
    </interactant>
    <interactant intactId="EBI-1054873">
        <id>Q9Y5Q9</id>
        <label>GTF3C3</label>
    </interactant>
    <organismsDiffer>false</organismsDiffer>
    <experiments>3</experiments>
</comment>
<comment type="interaction">
    <interactant intactId="EBI-395189">
        <id>P19388</id>
    </interactant>
    <interactant intactId="EBI-10990676">
        <id>Q96PC2</id>
        <label>IP6K3</label>
    </interactant>
    <organismsDiffer>false</organismsDiffer>
    <experiments>6</experiments>
</comment>
<comment type="interaction">
    <interactant intactId="EBI-395189">
        <id>P19388</id>
    </interactant>
    <interactant intactId="EBI-2432309">
        <id>Q92876</id>
        <label>KLK6</label>
    </interactant>
    <organismsDiffer>false</organismsDiffer>
    <experiments>3</experiments>
</comment>
<comment type="interaction">
    <interactant intactId="EBI-395189">
        <id>P19388</id>
    </interactant>
    <interactant intactId="EBI-745527">
        <id>Q9Y2X8</id>
        <label>UBE2D4</label>
    </interactant>
    <organismsDiffer>false</organismsDiffer>
    <experiments>3</experiments>
</comment>
<comment type="interaction">
    <interactant intactId="EBI-395189">
        <id>P19388</id>
    </interactant>
    <interactant intactId="EBI-741480">
        <id>Q9UMX0</id>
        <label>UBQLN1</label>
    </interactant>
    <organismsDiffer>false</organismsDiffer>
    <experiments>3</experiments>
</comment>
<comment type="interaction">
    <interactant intactId="EBI-395189">
        <id>P19388</id>
    </interactant>
    <interactant intactId="EBI-357067">
        <id>O94763</id>
        <label>URI1</label>
    </interactant>
    <organismsDiffer>false</organismsDiffer>
    <experiments>5</experiments>
</comment>
<comment type="interaction">
    <interactant intactId="EBI-395189">
        <id>P19388</id>
    </interactant>
    <interactant intactId="EBI-25900580">
        <id>Q9Y649</id>
    </interactant>
    <organismsDiffer>false</organismsDiffer>
    <experiments>3</experiments>
</comment>
<comment type="subcellular location">
    <subcellularLocation>
        <location evidence="10 20">Nucleus</location>
    </subcellularLocation>
    <subcellularLocation>
        <location evidence="23 24">Nucleus</location>
        <location evidence="23 24">Nucleolus</location>
    </subcellularLocation>
</comment>
<comment type="similarity">
    <text evidence="22">Belongs to the archaeal Rpo5/eukaryotic RPB5 RNA polymerase subunit family.</text>
</comment>
<feature type="chain" id="PRO_0000146075" description="DNA-directed RNA polymerases I, II, and III subunit RPABC1">
    <location>
        <begin position="1"/>
        <end position="210"/>
    </location>
</feature>
<feature type="modified residue" description="N-acetylmethionine" evidence="26 27">
    <location>
        <position position="1"/>
    </location>
</feature>
<feature type="cross-link" description="Glycyl lysine isopeptide (Lys-Gly) (interchain with G-Cter in SUMO2)" evidence="28">
    <location>
        <position position="81"/>
    </location>
</feature>
<feature type="sequence variant" id="VAR_028259" description="In dbSNP:rs12459404." evidence="2 3 7 18 21">
    <original>S</original>
    <variation>F</variation>
    <location>
        <position position="44"/>
    </location>
</feature>
<feature type="sequence conflict" description="In Ref. 1 and 3." evidence="22" ref="1 3">
    <original>Q</original>
    <variation>E</variation>
    <location>
        <position position="132"/>
    </location>
</feature>
<feature type="sequence conflict" description="In Ref. 3; BAA07406." evidence="22" ref="3">
    <original>T</original>
    <variation>S</variation>
    <location>
        <position position="157"/>
    </location>
</feature>
<feature type="sequence conflict" description="In Ref. 7; AAH34144." evidence="22" ref="7">
    <original>I</original>
    <variation>V</variation>
    <location>
        <position position="185"/>
    </location>
</feature>
<feature type="sequence conflict" description="In Ref. 3; BAA07406." evidence="22" ref="3">
    <original>K</original>
    <variation>R</variation>
    <location>
        <position position="186"/>
    </location>
</feature>
<feature type="helix" evidence="31">
    <location>
        <begin position="6"/>
        <end position="23"/>
    </location>
</feature>
<feature type="helix" evidence="31">
    <location>
        <begin position="30"/>
        <end position="33"/>
    </location>
</feature>
<feature type="helix" evidence="31">
    <location>
        <begin position="37"/>
        <end position="43"/>
    </location>
</feature>
<feature type="turn" evidence="31">
    <location>
        <begin position="48"/>
        <end position="51"/>
    </location>
</feature>
<feature type="turn" evidence="31">
    <location>
        <begin position="55"/>
        <end position="58"/>
    </location>
</feature>
<feature type="strand" evidence="31">
    <location>
        <begin position="60"/>
        <end position="66"/>
    </location>
</feature>
<feature type="strand" evidence="31">
    <location>
        <begin position="70"/>
        <end position="75"/>
    </location>
</feature>
<feature type="strand" evidence="31">
    <location>
        <begin position="78"/>
        <end position="81"/>
    </location>
</feature>
<feature type="helix" evidence="31">
    <location>
        <begin position="84"/>
        <end position="96"/>
    </location>
</feature>
<feature type="strand" evidence="31">
    <location>
        <begin position="101"/>
        <end position="108"/>
    </location>
</feature>
<feature type="helix" evidence="31">
    <location>
        <begin position="112"/>
        <end position="120"/>
    </location>
</feature>
<feature type="turn" evidence="30">
    <location>
        <begin position="121"/>
        <end position="124"/>
    </location>
</feature>
<feature type="strand" evidence="31">
    <location>
        <begin position="126"/>
        <end position="132"/>
    </location>
</feature>
<feature type="helix" evidence="31">
    <location>
        <begin position="133"/>
        <end position="135"/>
    </location>
</feature>
<feature type="helix" evidence="31">
    <location>
        <begin position="139"/>
        <end position="141"/>
    </location>
</feature>
<feature type="strand" evidence="31">
    <location>
        <begin position="142"/>
        <end position="145"/>
    </location>
</feature>
<feature type="strand" evidence="31">
    <location>
        <begin position="147"/>
        <end position="150"/>
    </location>
</feature>
<feature type="helix" evidence="31">
    <location>
        <begin position="153"/>
        <end position="162"/>
    </location>
</feature>
<feature type="turn" evidence="31">
    <location>
        <begin position="167"/>
        <end position="169"/>
    </location>
</feature>
<feature type="strand" evidence="31">
    <location>
        <begin position="172"/>
        <end position="174"/>
    </location>
</feature>
<feature type="strand" evidence="29">
    <location>
        <begin position="175"/>
        <end position="177"/>
    </location>
</feature>
<feature type="helix" evidence="31">
    <location>
        <begin position="178"/>
        <end position="183"/>
    </location>
</feature>
<feature type="strand" evidence="31">
    <location>
        <begin position="190"/>
        <end position="196"/>
    </location>
</feature>
<feature type="strand" evidence="31">
    <location>
        <begin position="198"/>
        <end position="210"/>
    </location>
</feature>
<gene>
    <name evidence="25" type="primary">POLR2E</name>
</gene>
<accession>P19388</accession>
<accession>B2R6L4</accession>
<accession>D6W5Y1</accession>
<accession>O43380</accession>
<accession>Q6PIH5</accession>
<accession>Q9BT06</accession>